<sequence length="60" mass="6464">MSLEDRAKATGKNIEGKAQEALGNVTGDPEDKAEGKAKQAESEVRHGVEDVKDNVKKKID</sequence>
<accession>Q8YXS7</accession>
<keyword id="KW-1185">Reference proteome</keyword>
<evidence type="ECO:0000256" key="1">
    <source>
        <dbReference type="SAM" id="MobiDB-lite"/>
    </source>
</evidence>
<evidence type="ECO:0000305" key="2"/>
<proteinExistence type="inferred from homology"/>
<name>Y1134_NOSS1</name>
<organism>
    <name type="scientific">Nostoc sp. (strain PCC 7120 / SAG 25.82 / UTEX 2576)</name>
    <dbReference type="NCBI Taxonomy" id="103690"/>
    <lineage>
        <taxon>Bacteria</taxon>
        <taxon>Bacillati</taxon>
        <taxon>Cyanobacteriota</taxon>
        <taxon>Cyanophyceae</taxon>
        <taxon>Nostocales</taxon>
        <taxon>Nostocaceae</taxon>
        <taxon>Nostoc</taxon>
    </lineage>
</organism>
<feature type="chain" id="PRO_0000209978" description="UPF0337 protein asr1134">
    <location>
        <begin position="1"/>
        <end position="60"/>
    </location>
</feature>
<feature type="region of interest" description="Disordered" evidence="1">
    <location>
        <begin position="1"/>
        <end position="60"/>
    </location>
</feature>
<feature type="compositionally biased region" description="Basic and acidic residues" evidence="1">
    <location>
        <begin position="1"/>
        <end position="18"/>
    </location>
</feature>
<feature type="compositionally biased region" description="Basic and acidic residues" evidence="1">
    <location>
        <begin position="29"/>
        <end position="60"/>
    </location>
</feature>
<gene>
    <name type="ordered locus">asr1134</name>
</gene>
<dbReference type="EMBL" id="BA000019">
    <property type="protein sequence ID" value="BAB73091.1"/>
    <property type="molecule type" value="Genomic_DNA"/>
</dbReference>
<dbReference type="PIR" id="AC1948">
    <property type="entry name" value="AC1948"/>
</dbReference>
<dbReference type="RefSeq" id="WP_010995307.1">
    <property type="nucleotide sequence ID" value="NZ_RSCN01000008.1"/>
</dbReference>
<dbReference type="SMR" id="Q8YXS7"/>
<dbReference type="STRING" id="103690.gene:10493148"/>
<dbReference type="KEGG" id="ana:asr1134"/>
<dbReference type="eggNOG" id="COG3237">
    <property type="taxonomic scope" value="Bacteria"/>
</dbReference>
<dbReference type="OrthoDB" id="465089at2"/>
<dbReference type="Proteomes" id="UP000002483">
    <property type="component" value="Chromosome"/>
</dbReference>
<dbReference type="Gene3D" id="1.10.1470.10">
    <property type="entry name" value="YjbJ"/>
    <property type="match status" value="1"/>
</dbReference>
<dbReference type="InterPro" id="IPR008462">
    <property type="entry name" value="CsbD"/>
</dbReference>
<dbReference type="InterPro" id="IPR036629">
    <property type="entry name" value="YjbJ_sf"/>
</dbReference>
<dbReference type="Pfam" id="PF05532">
    <property type="entry name" value="CsbD"/>
    <property type="match status" value="1"/>
</dbReference>
<dbReference type="SUPFAM" id="SSF69047">
    <property type="entry name" value="Hypothetical protein YjbJ"/>
    <property type="match status" value="1"/>
</dbReference>
<protein>
    <recommendedName>
        <fullName>UPF0337 protein asr1134</fullName>
    </recommendedName>
</protein>
<comment type="similarity">
    <text evidence="2">Belongs to the UPF0337 (CsbD) family.</text>
</comment>
<reference key="1">
    <citation type="journal article" date="2001" name="DNA Res.">
        <title>Complete genomic sequence of the filamentous nitrogen-fixing cyanobacterium Anabaena sp. strain PCC 7120.</title>
        <authorList>
            <person name="Kaneko T."/>
            <person name="Nakamura Y."/>
            <person name="Wolk C.P."/>
            <person name="Kuritz T."/>
            <person name="Sasamoto S."/>
            <person name="Watanabe A."/>
            <person name="Iriguchi M."/>
            <person name="Ishikawa A."/>
            <person name="Kawashima K."/>
            <person name="Kimura T."/>
            <person name="Kishida Y."/>
            <person name="Kohara M."/>
            <person name="Matsumoto M."/>
            <person name="Matsuno A."/>
            <person name="Muraki A."/>
            <person name="Nakazaki N."/>
            <person name="Shimpo S."/>
            <person name="Sugimoto M."/>
            <person name="Takazawa M."/>
            <person name="Yamada M."/>
            <person name="Yasuda M."/>
            <person name="Tabata S."/>
        </authorList>
    </citation>
    <scope>NUCLEOTIDE SEQUENCE [LARGE SCALE GENOMIC DNA]</scope>
    <source>
        <strain>PCC 7120 / SAG 25.82 / UTEX 2576</strain>
    </source>
</reference>